<comment type="function">
    <text evidence="1">Myoactive.</text>
</comment>
<comment type="subcellular location">
    <subcellularLocation>
        <location evidence="6">Secreted</location>
    </subcellularLocation>
</comment>
<comment type="similarity">
    <text evidence="2">Belongs to the pyrokinin family.</text>
</comment>
<organism>
    <name type="scientific">Striatophasma naukluftense</name>
    <name type="common">Gladiator</name>
    <name type="synonym">Heel-walker</name>
    <dbReference type="NCBI Taxonomy" id="1041429"/>
    <lineage>
        <taxon>Eukaryota</taxon>
        <taxon>Metazoa</taxon>
        <taxon>Ecdysozoa</taxon>
        <taxon>Arthropoda</taxon>
        <taxon>Hexapoda</taxon>
        <taxon>Insecta</taxon>
        <taxon>Pterygota</taxon>
        <taxon>Neoptera</taxon>
        <taxon>Polyneoptera</taxon>
        <taxon>Mantophasmatodea</taxon>
        <taxon>Austrophasmatidae</taxon>
        <taxon>Striatophasma</taxon>
    </lineage>
</organism>
<protein>
    <recommendedName>
        <fullName evidence="4">Pyrokinin-2</fullName>
        <shortName evidence="4">PK-2</shortName>
    </recommendedName>
    <alternativeName>
        <fullName evidence="1">FXPRL-amide</fullName>
    </alternativeName>
</protein>
<reference evidence="5" key="1">
    <citation type="journal article" date="2012" name="Syst. Biol.">
        <title>Peptidomics-based phylogeny and biogeography of Mantophasmatodea (Hexapoda).</title>
        <authorList>
            <person name="Predel R."/>
            <person name="Neupert S."/>
            <person name="Huetteroth W."/>
            <person name="Kahnt J."/>
            <person name="Waidelich D."/>
            <person name="Roth S."/>
        </authorList>
    </citation>
    <scope>PROTEIN SEQUENCE</scope>
    <scope>AMIDATION AT LEU-8</scope>
    <source>
        <tissue evidence="3">Corpora cardiaca</tissue>
    </source>
</reference>
<name>PPK2_STRNA</name>
<feature type="peptide" id="PRO_0000420751" description="Pyrokinin-2" evidence="3">
    <location>
        <begin position="1"/>
        <end position="8"/>
    </location>
</feature>
<feature type="modified residue" description="Leucine amide" evidence="3">
    <location>
        <position position="8"/>
    </location>
</feature>
<sequence length="8" mass="884">SPPFAPRL</sequence>
<evidence type="ECO:0000250" key="1">
    <source>
        <dbReference type="UniProtKB" id="P82619"/>
    </source>
</evidence>
<evidence type="ECO:0000255" key="2"/>
<evidence type="ECO:0000269" key="3">
    <source>
    </source>
</evidence>
<evidence type="ECO:0000303" key="4">
    <source>
    </source>
</evidence>
<evidence type="ECO:0000305" key="5"/>
<evidence type="ECO:0000305" key="6">
    <source>
    </source>
</evidence>
<keyword id="KW-0027">Amidation</keyword>
<keyword id="KW-0903">Direct protein sequencing</keyword>
<keyword id="KW-0527">Neuropeptide</keyword>
<keyword id="KW-0964">Secreted</keyword>
<dbReference type="GO" id="GO:0005576">
    <property type="term" value="C:extracellular region"/>
    <property type="evidence" value="ECO:0007669"/>
    <property type="project" value="UniProtKB-SubCell"/>
</dbReference>
<dbReference type="GO" id="GO:0007218">
    <property type="term" value="P:neuropeptide signaling pathway"/>
    <property type="evidence" value="ECO:0007669"/>
    <property type="project" value="UniProtKB-KW"/>
</dbReference>
<accession>B0M3B7</accession>
<proteinExistence type="evidence at protein level"/>